<accession>B1JDE5</accession>
<comment type="similarity">
    <text evidence="1">Belongs to the bacterial ribosomal protein bS16 family.</text>
</comment>
<reference key="1">
    <citation type="submission" date="2008-02" db="EMBL/GenBank/DDBJ databases">
        <title>Complete sequence of Pseudomonas putida W619.</title>
        <authorList>
            <person name="Copeland A."/>
            <person name="Lucas S."/>
            <person name="Lapidus A."/>
            <person name="Barry K."/>
            <person name="Detter J.C."/>
            <person name="Glavina del Rio T."/>
            <person name="Dalin E."/>
            <person name="Tice H."/>
            <person name="Pitluck S."/>
            <person name="Chain P."/>
            <person name="Malfatti S."/>
            <person name="Shin M."/>
            <person name="Vergez L."/>
            <person name="Schmutz J."/>
            <person name="Larimer F."/>
            <person name="Land M."/>
            <person name="Hauser L."/>
            <person name="Kyrpides N."/>
            <person name="Kim E."/>
            <person name="Taghavi S."/>
            <person name="Vangronsveld D."/>
            <person name="van der Lelie D."/>
            <person name="Richardson P."/>
        </authorList>
    </citation>
    <scope>NUCLEOTIDE SEQUENCE [LARGE SCALE GENOMIC DNA]</scope>
    <source>
        <strain>W619</strain>
    </source>
</reference>
<organism>
    <name type="scientific">Pseudomonas putida (strain W619)</name>
    <dbReference type="NCBI Taxonomy" id="390235"/>
    <lineage>
        <taxon>Bacteria</taxon>
        <taxon>Pseudomonadati</taxon>
        <taxon>Pseudomonadota</taxon>
        <taxon>Gammaproteobacteria</taxon>
        <taxon>Pseudomonadales</taxon>
        <taxon>Pseudomonadaceae</taxon>
        <taxon>Pseudomonas</taxon>
    </lineage>
</organism>
<sequence>MVTIRLARGGSKKRPFYHLTVTNSRNARDGRFVERVGFFNPIAAGAEVKLSVNQERVSYWLSQGAQPSERVAQLLKDAAKAAA</sequence>
<protein>
    <recommendedName>
        <fullName evidence="1">Small ribosomal subunit protein bS16</fullName>
    </recommendedName>
    <alternativeName>
        <fullName evidence="2">30S ribosomal protein S16</fullName>
    </alternativeName>
</protein>
<keyword id="KW-0687">Ribonucleoprotein</keyword>
<keyword id="KW-0689">Ribosomal protein</keyword>
<dbReference type="EMBL" id="CP000949">
    <property type="protein sequence ID" value="ACA74637.1"/>
    <property type="molecule type" value="Genomic_DNA"/>
</dbReference>
<dbReference type="SMR" id="B1JDE5"/>
<dbReference type="STRING" id="390235.PputW619_4157"/>
<dbReference type="KEGG" id="ppw:PputW619_4157"/>
<dbReference type="eggNOG" id="COG0228">
    <property type="taxonomic scope" value="Bacteria"/>
</dbReference>
<dbReference type="HOGENOM" id="CLU_100590_5_1_6"/>
<dbReference type="OrthoDB" id="9807878at2"/>
<dbReference type="GO" id="GO:0005737">
    <property type="term" value="C:cytoplasm"/>
    <property type="evidence" value="ECO:0007669"/>
    <property type="project" value="UniProtKB-ARBA"/>
</dbReference>
<dbReference type="GO" id="GO:0015935">
    <property type="term" value="C:small ribosomal subunit"/>
    <property type="evidence" value="ECO:0007669"/>
    <property type="project" value="TreeGrafter"/>
</dbReference>
<dbReference type="GO" id="GO:0003735">
    <property type="term" value="F:structural constituent of ribosome"/>
    <property type="evidence" value="ECO:0007669"/>
    <property type="project" value="InterPro"/>
</dbReference>
<dbReference type="GO" id="GO:0006412">
    <property type="term" value="P:translation"/>
    <property type="evidence" value="ECO:0007669"/>
    <property type="project" value="UniProtKB-UniRule"/>
</dbReference>
<dbReference type="FunFam" id="3.30.1320.10:FF:000001">
    <property type="entry name" value="30S ribosomal protein S16"/>
    <property type="match status" value="1"/>
</dbReference>
<dbReference type="Gene3D" id="3.30.1320.10">
    <property type="match status" value="1"/>
</dbReference>
<dbReference type="HAMAP" id="MF_00385">
    <property type="entry name" value="Ribosomal_bS16"/>
    <property type="match status" value="1"/>
</dbReference>
<dbReference type="InterPro" id="IPR000307">
    <property type="entry name" value="Ribosomal_bS16"/>
</dbReference>
<dbReference type="InterPro" id="IPR023803">
    <property type="entry name" value="Ribosomal_bS16_dom_sf"/>
</dbReference>
<dbReference type="NCBIfam" id="TIGR00002">
    <property type="entry name" value="S16"/>
    <property type="match status" value="1"/>
</dbReference>
<dbReference type="PANTHER" id="PTHR12919">
    <property type="entry name" value="30S RIBOSOMAL PROTEIN S16"/>
    <property type="match status" value="1"/>
</dbReference>
<dbReference type="PANTHER" id="PTHR12919:SF20">
    <property type="entry name" value="SMALL RIBOSOMAL SUBUNIT PROTEIN BS16M"/>
    <property type="match status" value="1"/>
</dbReference>
<dbReference type="Pfam" id="PF00886">
    <property type="entry name" value="Ribosomal_S16"/>
    <property type="match status" value="1"/>
</dbReference>
<dbReference type="SUPFAM" id="SSF54565">
    <property type="entry name" value="Ribosomal protein S16"/>
    <property type="match status" value="1"/>
</dbReference>
<evidence type="ECO:0000255" key="1">
    <source>
        <dbReference type="HAMAP-Rule" id="MF_00385"/>
    </source>
</evidence>
<evidence type="ECO:0000305" key="2"/>
<proteinExistence type="inferred from homology"/>
<name>RS16_PSEPW</name>
<feature type="chain" id="PRO_1000196459" description="Small ribosomal subunit protein bS16">
    <location>
        <begin position="1"/>
        <end position="83"/>
    </location>
</feature>
<gene>
    <name evidence="1" type="primary">rpsP</name>
    <name type="ordered locus">PputW619_4157</name>
</gene>